<proteinExistence type="inferred from homology"/>
<dbReference type="EMBL" id="CP000606">
    <property type="protein sequence ID" value="ABO22031.1"/>
    <property type="molecule type" value="Genomic_DNA"/>
</dbReference>
<dbReference type="RefSeq" id="WP_011863967.1">
    <property type="nucleotide sequence ID" value="NC_009092.1"/>
</dbReference>
<dbReference type="SMR" id="A3Q983"/>
<dbReference type="STRING" id="323850.Shew_0159"/>
<dbReference type="KEGG" id="slo:Shew_0159"/>
<dbReference type="eggNOG" id="COG0088">
    <property type="taxonomic scope" value="Bacteria"/>
</dbReference>
<dbReference type="HOGENOM" id="CLU_041575_5_2_6"/>
<dbReference type="OrthoDB" id="9803201at2"/>
<dbReference type="Proteomes" id="UP000001558">
    <property type="component" value="Chromosome"/>
</dbReference>
<dbReference type="GO" id="GO:1990904">
    <property type="term" value="C:ribonucleoprotein complex"/>
    <property type="evidence" value="ECO:0007669"/>
    <property type="project" value="UniProtKB-KW"/>
</dbReference>
<dbReference type="GO" id="GO:0005840">
    <property type="term" value="C:ribosome"/>
    <property type="evidence" value="ECO:0007669"/>
    <property type="project" value="UniProtKB-KW"/>
</dbReference>
<dbReference type="GO" id="GO:0019843">
    <property type="term" value="F:rRNA binding"/>
    <property type="evidence" value="ECO:0007669"/>
    <property type="project" value="UniProtKB-UniRule"/>
</dbReference>
<dbReference type="GO" id="GO:0003735">
    <property type="term" value="F:structural constituent of ribosome"/>
    <property type="evidence" value="ECO:0007669"/>
    <property type="project" value="InterPro"/>
</dbReference>
<dbReference type="GO" id="GO:0006412">
    <property type="term" value="P:translation"/>
    <property type="evidence" value="ECO:0007669"/>
    <property type="project" value="UniProtKB-UniRule"/>
</dbReference>
<dbReference type="FunFam" id="3.40.1370.10:FF:000001">
    <property type="entry name" value="50S ribosomal protein L4"/>
    <property type="match status" value="1"/>
</dbReference>
<dbReference type="Gene3D" id="3.40.1370.10">
    <property type="match status" value="1"/>
</dbReference>
<dbReference type="HAMAP" id="MF_01328_B">
    <property type="entry name" value="Ribosomal_uL4_B"/>
    <property type="match status" value="1"/>
</dbReference>
<dbReference type="InterPro" id="IPR002136">
    <property type="entry name" value="Ribosomal_uL4"/>
</dbReference>
<dbReference type="InterPro" id="IPR013005">
    <property type="entry name" value="Ribosomal_uL4-like"/>
</dbReference>
<dbReference type="InterPro" id="IPR023574">
    <property type="entry name" value="Ribosomal_uL4_dom_sf"/>
</dbReference>
<dbReference type="NCBIfam" id="TIGR03953">
    <property type="entry name" value="rplD_bact"/>
    <property type="match status" value="1"/>
</dbReference>
<dbReference type="PANTHER" id="PTHR10746">
    <property type="entry name" value="50S RIBOSOMAL PROTEIN L4"/>
    <property type="match status" value="1"/>
</dbReference>
<dbReference type="PANTHER" id="PTHR10746:SF6">
    <property type="entry name" value="LARGE RIBOSOMAL SUBUNIT PROTEIN UL4M"/>
    <property type="match status" value="1"/>
</dbReference>
<dbReference type="Pfam" id="PF00573">
    <property type="entry name" value="Ribosomal_L4"/>
    <property type="match status" value="1"/>
</dbReference>
<dbReference type="SUPFAM" id="SSF52166">
    <property type="entry name" value="Ribosomal protein L4"/>
    <property type="match status" value="1"/>
</dbReference>
<reference key="1">
    <citation type="submission" date="2007-03" db="EMBL/GenBank/DDBJ databases">
        <title>Complete sequence of Shewanella loihica PV-4.</title>
        <authorList>
            <consortium name="US DOE Joint Genome Institute"/>
            <person name="Copeland A."/>
            <person name="Lucas S."/>
            <person name="Lapidus A."/>
            <person name="Barry K."/>
            <person name="Detter J.C."/>
            <person name="Glavina del Rio T."/>
            <person name="Hammon N."/>
            <person name="Israni S."/>
            <person name="Dalin E."/>
            <person name="Tice H."/>
            <person name="Pitluck S."/>
            <person name="Chain P."/>
            <person name="Malfatti S."/>
            <person name="Shin M."/>
            <person name="Vergez L."/>
            <person name="Schmutz J."/>
            <person name="Larimer F."/>
            <person name="Land M."/>
            <person name="Hauser L."/>
            <person name="Kyrpides N."/>
            <person name="Mikhailova N."/>
            <person name="Romine M.F."/>
            <person name="Serres G."/>
            <person name="Fredrickson J."/>
            <person name="Tiedje J."/>
            <person name="Richardson P."/>
        </authorList>
    </citation>
    <scope>NUCLEOTIDE SEQUENCE [LARGE SCALE GENOMIC DNA]</scope>
    <source>
        <strain>ATCC BAA-1088 / PV-4</strain>
    </source>
</reference>
<keyword id="KW-1185">Reference proteome</keyword>
<keyword id="KW-0687">Ribonucleoprotein</keyword>
<keyword id="KW-0689">Ribosomal protein</keyword>
<keyword id="KW-0694">RNA-binding</keyword>
<keyword id="KW-0699">rRNA-binding</keyword>
<feature type="chain" id="PRO_1000052495" description="Large ribosomal subunit protein uL4">
    <location>
        <begin position="1"/>
        <end position="201"/>
    </location>
</feature>
<feature type="region of interest" description="Disordered" evidence="2">
    <location>
        <begin position="45"/>
        <end position="71"/>
    </location>
</feature>
<name>RL4_SHELP</name>
<comment type="function">
    <text evidence="1">One of the primary rRNA binding proteins, this protein initially binds near the 5'-end of the 23S rRNA. It is important during the early stages of 50S assembly. It makes multiple contacts with different domains of the 23S rRNA in the assembled 50S subunit and ribosome.</text>
</comment>
<comment type="function">
    <text evidence="1">Forms part of the polypeptide exit tunnel.</text>
</comment>
<comment type="subunit">
    <text evidence="1">Part of the 50S ribosomal subunit.</text>
</comment>
<comment type="similarity">
    <text evidence="1">Belongs to the universal ribosomal protein uL4 family.</text>
</comment>
<accession>A3Q983</accession>
<gene>
    <name evidence="1" type="primary">rplD</name>
    <name type="ordered locus">Shew_0159</name>
</gene>
<evidence type="ECO:0000255" key="1">
    <source>
        <dbReference type="HAMAP-Rule" id="MF_01328"/>
    </source>
</evidence>
<evidence type="ECO:0000256" key="2">
    <source>
        <dbReference type="SAM" id="MobiDB-lite"/>
    </source>
</evidence>
<evidence type="ECO:0000305" key="3"/>
<protein>
    <recommendedName>
        <fullName evidence="1">Large ribosomal subunit protein uL4</fullName>
    </recommendedName>
    <alternativeName>
        <fullName evidence="3">50S ribosomal protein L4</fullName>
    </alternativeName>
</protein>
<sequence>MELVLKDAQSALEVSETTFGRDFNEALVHQVVVAYAANARQGTRAQKTRAEVTGSGKKPWRQKGTGRARAGTVKGPIWRGGGVSFAAKTQDHSQKVNKKMYRGALKSILSELVRQDRLVVVESFGVEAPKTKELKAKLKDMKLEDVLIVTPEIDENLFLAARNLYKVDVRDVAGIDPVSLIAFEKVLVTADAVKQIEEMLG</sequence>
<organism>
    <name type="scientific">Shewanella loihica (strain ATCC BAA-1088 / PV-4)</name>
    <dbReference type="NCBI Taxonomy" id="323850"/>
    <lineage>
        <taxon>Bacteria</taxon>
        <taxon>Pseudomonadati</taxon>
        <taxon>Pseudomonadota</taxon>
        <taxon>Gammaproteobacteria</taxon>
        <taxon>Alteromonadales</taxon>
        <taxon>Shewanellaceae</taxon>
        <taxon>Shewanella</taxon>
    </lineage>
</organism>